<keyword id="KW-0238">DNA-binding</keyword>
<keyword id="KW-0446">Lipid-binding</keyword>
<keyword id="KW-0479">Metal-binding</keyword>
<keyword id="KW-0539">Nucleus</keyword>
<keyword id="KW-0675">Receptor</keyword>
<keyword id="KW-0754">Steroid-binding</keyword>
<keyword id="KW-0804">Transcription</keyword>
<keyword id="KW-0805">Transcription regulation</keyword>
<keyword id="KW-0862">Zinc</keyword>
<keyword id="KW-0863">Zinc-finger</keyword>
<reference key="1">
    <citation type="journal article" date="1999" name="Endocrinology">
        <title>Androgen receptor, estrogen receptor alpha, and estrogen receptor beta show distinct patterns of expression in forebrain song control nuclei of European starlings.</title>
        <authorList>
            <person name="Bernard D.J."/>
            <person name="Bentley G.E."/>
            <person name="Balthazart J."/>
            <person name="Turek F.W."/>
            <person name="Ball G.F."/>
        </authorList>
    </citation>
    <scope>NUCLEOTIDE SEQUENCE [MRNA]</scope>
    <source>
        <tissue>Brain</tissue>
    </source>
</reference>
<name>ESR2_STUVU</name>
<dbReference type="EMBL" id="AF113513">
    <property type="protein sequence ID" value="AAD56593.1"/>
    <property type="molecule type" value="mRNA"/>
</dbReference>
<dbReference type="RefSeq" id="NP_001310518.1">
    <property type="nucleotide sequence ID" value="NM_001323589.1"/>
</dbReference>
<dbReference type="SMR" id="Q9PVE2"/>
<dbReference type="GeneID" id="106850206"/>
<dbReference type="CTD" id="2100"/>
<dbReference type="GO" id="GO:0005634">
    <property type="term" value="C:nucleus"/>
    <property type="evidence" value="ECO:0007669"/>
    <property type="project" value="UniProtKB-SubCell"/>
</dbReference>
<dbReference type="GO" id="GO:0030284">
    <property type="term" value="F:nuclear estrogen receptor activity"/>
    <property type="evidence" value="ECO:0007669"/>
    <property type="project" value="InterPro"/>
</dbReference>
<dbReference type="GO" id="GO:0043565">
    <property type="term" value="F:sequence-specific DNA binding"/>
    <property type="evidence" value="ECO:0007669"/>
    <property type="project" value="InterPro"/>
</dbReference>
<dbReference type="GO" id="GO:0005496">
    <property type="term" value="F:steroid binding"/>
    <property type="evidence" value="ECO:0000250"/>
    <property type="project" value="UniProtKB"/>
</dbReference>
<dbReference type="GO" id="GO:0008270">
    <property type="term" value="F:zinc ion binding"/>
    <property type="evidence" value="ECO:0007669"/>
    <property type="project" value="UniProtKB-KW"/>
</dbReference>
<dbReference type="GO" id="GO:0071392">
    <property type="term" value="P:cellular response to estradiol stimulus"/>
    <property type="evidence" value="ECO:0007669"/>
    <property type="project" value="InterPro"/>
</dbReference>
<dbReference type="GO" id="GO:0030520">
    <property type="term" value="P:estrogen receptor signaling pathway"/>
    <property type="evidence" value="ECO:0007669"/>
    <property type="project" value="InterPro"/>
</dbReference>
<dbReference type="CDD" id="cd07171">
    <property type="entry name" value="NR_DBD_ER"/>
    <property type="match status" value="1"/>
</dbReference>
<dbReference type="CDD" id="cd06949">
    <property type="entry name" value="NR_LBD_ER"/>
    <property type="match status" value="1"/>
</dbReference>
<dbReference type="FunFam" id="1.10.565.10:FF:000010">
    <property type="entry name" value="Estrogen receptor"/>
    <property type="match status" value="1"/>
</dbReference>
<dbReference type="FunFam" id="3.30.50.10:FF:000014">
    <property type="entry name" value="Estrogen receptor beta"/>
    <property type="match status" value="1"/>
</dbReference>
<dbReference type="Gene3D" id="3.30.50.10">
    <property type="entry name" value="Erythroid Transcription Factor GATA-1, subunit A"/>
    <property type="match status" value="1"/>
</dbReference>
<dbReference type="Gene3D" id="1.10.565.10">
    <property type="entry name" value="Retinoid X Receptor"/>
    <property type="match status" value="1"/>
</dbReference>
<dbReference type="InterPro" id="IPR021064">
    <property type="entry name" value="ER-beta-like_N"/>
</dbReference>
<dbReference type="InterPro" id="IPR028355">
    <property type="entry name" value="ER-beta/gamma"/>
</dbReference>
<dbReference type="InterPro" id="IPR024178">
    <property type="entry name" value="Est_rcpt/est-rel_rcp"/>
</dbReference>
<dbReference type="InterPro" id="IPR035500">
    <property type="entry name" value="NHR-like_dom_sf"/>
</dbReference>
<dbReference type="InterPro" id="IPR000536">
    <property type="entry name" value="Nucl_hrmn_rcpt_lig-bd"/>
</dbReference>
<dbReference type="InterPro" id="IPR050200">
    <property type="entry name" value="Nuclear_hormone_rcpt_NR3"/>
</dbReference>
<dbReference type="InterPro" id="IPR001723">
    <property type="entry name" value="Nuclear_hrmn_rcpt"/>
</dbReference>
<dbReference type="InterPro" id="IPR001628">
    <property type="entry name" value="Znf_hrmn_rcpt"/>
</dbReference>
<dbReference type="InterPro" id="IPR013088">
    <property type="entry name" value="Znf_NHR/GATA"/>
</dbReference>
<dbReference type="PANTHER" id="PTHR48092">
    <property type="entry name" value="KNIRPS-RELATED PROTEIN-RELATED"/>
    <property type="match status" value="1"/>
</dbReference>
<dbReference type="Pfam" id="PF12497">
    <property type="entry name" value="ERbeta_N"/>
    <property type="match status" value="1"/>
</dbReference>
<dbReference type="Pfam" id="PF00104">
    <property type="entry name" value="Hormone_recep"/>
    <property type="match status" value="1"/>
</dbReference>
<dbReference type="Pfam" id="PF00105">
    <property type="entry name" value="zf-C4"/>
    <property type="match status" value="1"/>
</dbReference>
<dbReference type="PIRSF" id="PIRSF500102">
    <property type="entry name" value="ER-b"/>
    <property type="match status" value="1"/>
</dbReference>
<dbReference type="PIRSF" id="PIRSF002527">
    <property type="entry name" value="ER-like_NR"/>
    <property type="match status" value="1"/>
</dbReference>
<dbReference type="PRINTS" id="PR00398">
    <property type="entry name" value="STRDHORMONER"/>
</dbReference>
<dbReference type="PRINTS" id="PR00047">
    <property type="entry name" value="STROIDFINGER"/>
</dbReference>
<dbReference type="SMART" id="SM00430">
    <property type="entry name" value="HOLI"/>
    <property type="match status" value="1"/>
</dbReference>
<dbReference type="SMART" id="SM00399">
    <property type="entry name" value="ZnF_C4"/>
    <property type="match status" value="1"/>
</dbReference>
<dbReference type="SUPFAM" id="SSF57716">
    <property type="entry name" value="Glucocorticoid receptor-like (DNA-binding domain)"/>
    <property type="match status" value="1"/>
</dbReference>
<dbReference type="SUPFAM" id="SSF48508">
    <property type="entry name" value="Nuclear receptor ligand-binding domain"/>
    <property type="match status" value="1"/>
</dbReference>
<dbReference type="PROSITE" id="PS51843">
    <property type="entry name" value="NR_LBD"/>
    <property type="match status" value="1"/>
</dbReference>
<dbReference type="PROSITE" id="PS00031">
    <property type="entry name" value="NUCLEAR_REC_DBD_1"/>
    <property type="match status" value="1"/>
</dbReference>
<dbReference type="PROSITE" id="PS51030">
    <property type="entry name" value="NUCLEAR_REC_DBD_2"/>
    <property type="match status" value="1"/>
</dbReference>
<protein>
    <recommendedName>
        <fullName>Estrogen receptor beta</fullName>
        <shortName>ER-beta</shortName>
    </recommendedName>
    <alternativeName>
        <fullName>Nuclear receptor subfamily 3 group A member 2</fullName>
    </alternativeName>
</protein>
<feature type="chain" id="PRO_0000053650" description="Estrogen receptor beta">
    <location>
        <begin position="1"/>
        <end position="554"/>
    </location>
</feature>
<feature type="domain" description="NR LBD" evidence="4">
    <location>
        <begin position="289"/>
        <end position="521"/>
    </location>
</feature>
<feature type="DNA-binding region" description="Nuclear receptor" evidence="3">
    <location>
        <begin position="174"/>
        <end position="239"/>
    </location>
</feature>
<feature type="zinc finger region" description="NR C4-type" evidence="3">
    <location>
        <begin position="174"/>
        <end position="194"/>
    </location>
</feature>
<feature type="zinc finger region" description="NR C4-type" evidence="3">
    <location>
        <begin position="210"/>
        <end position="234"/>
    </location>
</feature>
<feature type="region of interest" description="Modulating">
    <location>
        <begin position="25"/>
        <end position="173"/>
    </location>
</feature>
<feature type="region of interest" description="Disordered" evidence="5">
    <location>
        <begin position="529"/>
        <end position="554"/>
    </location>
</feature>
<proteinExistence type="evidence at transcript level"/>
<gene>
    <name type="primary">ESR2</name>
    <name type="synonym">NR3A2</name>
</gene>
<sequence length="554" mass="62174">MSLCTSSHKDFSQLLPLQDIGCNKTEIKNSPAGVISPAPYSCNQSTLTAEHSPVYIPSSYMESRHEYSTMAFCSPAMVNYNIASNFGDPEAVAARQTSSPGALWSAPGHLSPLSLHCQSSLLYAEQPKSLWCEARPMEPVLPGSRETLKRKTNGNDCTSPIANNPGSKKDAHFCAVCSDYASGYHYGVWSCEGCKAFFKRSIQGHNDYICPATNQCTIDKNRRKSCQACRLRKCYEVGMMKCGSRRERCGYRILRSHRGAEERVHCLGRARRYSEAATRVKEILLSTVSPEQFVLTLLEAEPPHVLVSRPSKPFTEASMMMSLTKLADKELVHMIGWAKKIPGFIDLSLYDQVRLLESCWMEVLMIGLMWRSIDHPGKLIFAPDLVLDRDEGKCVEGILEIFDMLLAMTSRFRELKLQHKEYLCVKAMILLNSSMFPLSAEEPESNRKLHHLLNVVTEALVWVIAKSGIPSQQQTTRLANLLMLLSHVRHASNKGMEHLLSMKCKNVVPVYDLLLEMLNAHTLRGQRKPLATHPEFGPLEQMEPGESLRKGEPQ</sequence>
<comment type="function">
    <text evidence="2">Binds estrogens with an affinity similar to that of ER-alpha, and activates expression of reporter genes containing estrogen response elements (ERE) in an estrogen-dependent manner. Locally synthesized estrogens may act via ER beta, in addition to ER alpha, to mediate seasonal or developmental effects on nearby song nuclei.</text>
</comment>
<comment type="subunit">
    <text evidence="1">Binds DNA as a homodimer. Can form a heterodimer with ER-alpha (By similarity).</text>
</comment>
<comment type="subcellular location">
    <subcellularLocation>
        <location>Nucleus</location>
    </subcellularLocation>
</comment>
<comment type="tissue specificity">
    <text>Brain, pituitary, skeletal muscle, liver, adrenal, kidney, intestine and ovary.</text>
</comment>
<comment type="domain">
    <text>Composed of three domains: a modulating N-terminal domain, a DNA-binding domain and a C-terminal ligand-binding domain.</text>
</comment>
<comment type="similarity">
    <text evidence="6">Belongs to the nuclear hormone receptor family. NR3 subfamily.</text>
</comment>
<evidence type="ECO:0000250" key="1"/>
<evidence type="ECO:0000250" key="2">
    <source>
        <dbReference type="UniProtKB" id="Q92731"/>
    </source>
</evidence>
<evidence type="ECO:0000255" key="3">
    <source>
        <dbReference type="PROSITE-ProRule" id="PRU00407"/>
    </source>
</evidence>
<evidence type="ECO:0000255" key="4">
    <source>
        <dbReference type="PROSITE-ProRule" id="PRU01189"/>
    </source>
</evidence>
<evidence type="ECO:0000256" key="5">
    <source>
        <dbReference type="SAM" id="MobiDB-lite"/>
    </source>
</evidence>
<evidence type="ECO:0000305" key="6"/>
<accession>Q9PVE2</accession>
<organism>
    <name type="scientific">Sturnus vulgaris</name>
    <name type="common">Starling</name>
    <dbReference type="NCBI Taxonomy" id="9172"/>
    <lineage>
        <taxon>Eukaryota</taxon>
        <taxon>Metazoa</taxon>
        <taxon>Chordata</taxon>
        <taxon>Craniata</taxon>
        <taxon>Vertebrata</taxon>
        <taxon>Euteleostomi</taxon>
        <taxon>Archelosauria</taxon>
        <taxon>Archosauria</taxon>
        <taxon>Dinosauria</taxon>
        <taxon>Saurischia</taxon>
        <taxon>Theropoda</taxon>
        <taxon>Coelurosauria</taxon>
        <taxon>Aves</taxon>
        <taxon>Neognathae</taxon>
        <taxon>Neoaves</taxon>
        <taxon>Telluraves</taxon>
        <taxon>Australaves</taxon>
        <taxon>Passeriformes</taxon>
        <taxon>Sturnidae</taxon>
        <taxon>Sturnus</taxon>
    </lineage>
</organism>